<comment type="function">
    <text evidence="1">Catalyzes the specific phosphorylation of 1,6-anhydro-N-acetylmuramic acid (anhMurNAc) with the simultaneous cleavage of the 1,6-anhydro ring, generating MurNAc-6-P. Is required for the utilization of anhMurNAc either imported from the medium or derived from its own cell wall murein, and thus plays a role in cell wall recycling.</text>
</comment>
<comment type="catalytic activity">
    <reaction evidence="1">
        <text>1,6-anhydro-N-acetyl-beta-muramate + ATP + H2O = N-acetyl-D-muramate 6-phosphate + ADP + H(+)</text>
        <dbReference type="Rhea" id="RHEA:24952"/>
        <dbReference type="ChEBI" id="CHEBI:15377"/>
        <dbReference type="ChEBI" id="CHEBI:15378"/>
        <dbReference type="ChEBI" id="CHEBI:30616"/>
        <dbReference type="ChEBI" id="CHEBI:58690"/>
        <dbReference type="ChEBI" id="CHEBI:58722"/>
        <dbReference type="ChEBI" id="CHEBI:456216"/>
        <dbReference type="EC" id="2.7.1.170"/>
    </reaction>
</comment>
<comment type="pathway">
    <text evidence="1">Amino-sugar metabolism; 1,6-anhydro-N-acetylmuramate degradation.</text>
</comment>
<comment type="pathway">
    <text evidence="1">Cell wall biogenesis; peptidoglycan recycling.</text>
</comment>
<comment type="similarity">
    <text evidence="1">Belongs to the anhydro-N-acetylmuramic acid kinase family.</text>
</comment>
<accession>A9NAH7</accession>
<evidence type="ECO:0000255" key="1">
    <source>
        <dbReference type="HAMAP-Rule" id="MF_01270"/>
    </source>
</evidence>
<sequence>MPKERYIGLISGTSMDALDTALVQFDPLKIIATHGEPIPTELKKNLVALSTGTDNSIPSMGETDVALGRLFGEAVLTLLEKAKVSSDSIQAIGSHGQTIRHMPNGKHPFTLQIGDPNTIAALTGITTVADFRRRDMALGGQGAPLAPAFHEFLLRDQSENRLILNIGGIANLTFLPRDPEKSTIGFDTGPGNTLLDAWCLMNLNKDYDDQGQWAASGRVQEKLVAQLLAEPYFQTPPPKSTGREYFNLNWLKKNLNGEKFDPVDIQATLVELTARSVANCCRNFSMDSGSLWLCGGGARNHHLVNRLKVLCKPLRVTTTEEIGIHPDWLEAVCFAWLAKQTLEKKPGNLPSVTGAKKSAILGAIYWGEKFNY</sequence>
<dbReference type="EC" id="2.7.1.170" evidence="1"/>
<dbReference type="EMBL" id="CP000890">
    <property type="protein sequence ID" value="ABX77450.1"/>
    <property type="molecule type" value="Genomic_DNA"/>
</dbReference>
<dbReference type="RefSeq" id="WP_005770633.1">
    <property type="nucleotide sequence ID" value="NC_010117.1"/>
</dbReference>
<dbReference type="SMR" id="A9NAH7"/>
<dbReference type="KEGG" id="cbs:COXBURSA331_A0269"/>
<dbReference type="HOGENOM" id="CLU_038782_0_0_6"/>
<dbReference type="UniPathway" id="UPA00343"/>
<dbReference type="UniPathway" id="UPA00544"/>
<dbReference type="GO" id="GO:0005524">
    <property type="term" value="F:ATP binding"/>
    <property type="evidence" value="ECO:0007669"/>
    <property type="project" value="UniProtKB-UniRule"/>
</dbReference>
<dbReference type="GO" id="GO:0016301">
    <property type="term" value="F:kinase activity"/>
    <property type="evidence" value="ECO:0007669"/>
    <property type="project" value="UniProtKB-KW"/>
</dbReference>
<dbReference type="GO" id="GO:0016773">
    <property type="term" value="F:phosphotransferase activity, alcohol group as acceptor"/>
    <property type="evidence" value="ECO:0007669"/>
    <property type="project" value="UniProtKB-UniRule"/>
</dbReference>
<dbReference type="GO" id="GO:0097175">
    <property type="term" value="P:1,6-anhydro-N-acetyl-beta-muramic acid catabolic process"/>
    <property type="evidence" value="ECO:0007669"/>
    <property type="project" value="UniProtKB-UniRule"/>
</dbReference>
<dbReference type="GO" id="GO:0006040">
    <property type="term" value="P:amino sugar metabolic process"/>
    <property type="evidence" value="ECO:0007669"/>
    <property type="project" value="InterPro"/>
</dbReference>
<dbReference type="GO" id="GO:0009254">
    <property type="term" value="P:peptidoglycan turnover"/>
    <property type="evidence" value="ECO:0007669"/>
    <property type="project" value="UniProtKB-UniRule"/>
</dbReference>
<dbReference type="CDD" id="cd24050">
    <property type="entry name" value="ASKHA_NBD_ANMK"/>
    <property type="match status" value="1"/>
</dbReference>
<dbReference type="Gene3D" id="3.30.420.40">
    <property type="match status" value="2"/>
</dbReference>
<dbReference type="HAMAP" id="MF_01270">
    <property type="entry name" value="AnhMurNAc_kinase"/>
    <property type="match status" value="1"/>
</dbReference>
<dbReference type="InterPro" id="IPR005338">
    <property type="entry name" value="Anhydro_N_Ac-Mur_kinase"/>
</dbReference>
<dbReference type="InterPro" id="IPR043129">
    <property type="entry name" value="ATPase_NBD"/>
</dbReference>
<dbReference type="NCBIfam" id="NF007139">
    <property type="entry name" value="PRK09585.1-3"/>
    <property type="match status" value="1"/>
</dbReference>
<dbReference type="NCBIfam" id="NF007148">
    <property type="entry name" value="PRK09585.3-2"/>
    <property type="match status" value="1"/>
</dbReference>
<dbReference type="PANTHER" id="PTHR30605">
    <property type="entry name" value="ANHYDRO-N-ACETYLMURAMIC ACID KINASE"/>
    <property type="match status" value="1"/>
</dbReference>
<dbReference type="PANTHER" id="PTHR30605:SF0">
    <property type="entry name" value="ANHYDRO-N-ACETYLMURAMIC ACID KINASE"/>
    <property type="match status" value="1"/>
</dbReference>
<dbReference type="Pfam" id="PF03702">
    <property type="entry name" value="AnmK"/>
    <property type="match status" value="1"/>
</dbReference>
<dbReference type="SUPFAM" id="SSF53067">
    <property type="entry name" value="Actin-like ATPase domain"/>
    <property type="match status" value="1"/>
</dbReference>
<gene>
    <name evidence="1" type="primary">anmK</name>
    <name type="ordered locus">COXBURSA331_A0269</name>
</gene>
<feature type="chain" id="PRO_1000085833" description="Anhydro-N-acetylmuramic acid kinase">
    <location>
        <begin position="1"/>
        <end position="372"/>
    </location>
</feature>
<feature type="binding site" evidence="1">
    <location>
        <begin position="12"/>
        <end position="19"/>
    </location>
    <ligand>
        <name>ATP</name>
        <dbReference type="ChEBI" id="CHEBI:30616"/>
    </ligand>
</feature>
<proteinExistence type="inferred from homology"/>
<keyword id="KW-0067">ATP-binding</keyword>
<keyword id="KW-0119">Carbohydrate metabolism</keyword>
<keyword id="KW-0418">Kinase</keyword>
<keyword id="KW-0547">Nucleotide-binding</keyword>
<keyword id="KW-0808">Transferase</keyword>
<name>ANMK_COXBR</name>
<protein>
    <recommendedName>
        <fullName evidence="1">Anhydro-N-acetylmuramic acid kinase</fullName>
        <ecNumber evidence="1">2.7.1.170</ecNumber>
    </recommendedName>
    <alternativeName>
        <fullName evidence="1">AnhMurNAc kinase</fullName>
    </alternativeName>
</protein>
<organism>
    <name type="scientific">Coxiella burnetii (strain RSA 331 / Henzerling II)</name>
    <dbReference type="NCBI Taxonomy" id="360115"/>
    <lineage>
        <taxon>Bacteria</taxon>
        <taxon>Pseudomonadati</taxon>
        <taxon>Pseudomonadota</taxon>
        <taxon>Gammaproteobacteria</taxon>
        <taxon>Legionellales</taxon>
        <taxon>Coxiellaceae</taxon>
        <taxon>Coxiella</taxon>
    </lineage>
</organism>
<reference key="1">
    <citation type="submission" date="2007-11" db="EMBL/GenBank/DDBJ databases">
        <title>Genome sequencing of phylogenetically and phenotypically diverse Coxiella burnetii isolates.</title>
        <authorList>
            <person name="Seshadri R."/>
            <person name="Samuel J.E."/>
        </authorList>
    </citation>
    <scope>NUCLEOTIDE SEQUENCE [LARGE SCALE GENOMIC DNA]</scope>
    <source>
        <strain>RSA 331 / Henzerling II</strain>
    </source>
</reference>